<feature type="chain" id="PRO_0000204232" description="Regulator of G-protein signaling 20">
    <location>
        <begin position="1"/>
        <end position="374"/>
    </location>
</feature>
<feature type="domain" description="RGS" evidence="2">
    <location>
        <begin position="248"/>
        <end position="364"/>
    </location>
</feature>
<feature type="region of interest" description="Disordered" evidence="3">
    <location>
        <begin position="1"/>
        <end position="21"/>
    </location>
</feature>
<feature type="region of interest" description="Disordered" evidence="3">
    <location>
        <begin position="135"/>
        <end position="158"/>
    </location>
</feature>
<feature type="compositionally biased region" description="Polar residues" evidence="3">
    <location>
        <begin position="1"/>
        <end position="11"/>
    </location>
</feature>
<feature type="compositionally biased region" description="Basic residues" evidence="3">
    <location>
        <begin position="12"/>
        <end position="21"/>
    </location>
</feature>
<reference key="1">
    <citation type="journal article" date="1997" name="Proc. Natl. Acad. Sci. U.S.A.">
        <title>The core domain of a new retina specific RGS protein stimulates the GTPase activity of transducin in vitro.</title>
        <authorList>
            <person name="Faurobert E."/>
            <person name="Hurley J.B."/>
        </authorList>
    </citation>
    <scope>NUCLEOTIDE SEQUENCE [MRNA]</scope>
    <source>
        <tissue>Retina</tissue>
    </source>
</reference>
<reference key="2">
    <citation type="journal article" date="1998" name="J. Biol. Chem.">
        <title>RGSZ1, a Gz-selective RGS protein in brain. Structure, membrane association, regulation by Galphaz phosphorylation, and relationship to a Gz GTPase-activating protein subfamily.</title>
        <authorList>
            <person name="Wang J."/>
            <person name="Ducret A."/>
            <person name="Tu Y."/>
            <person name="Kozasa T."/>
            <person name="Aebersold R."/>
            <person name="Ross E.M."/>
        </authorList>
    </citation>
    <scope>PROTEIN SEQUENCE OF 312-325</scope>
    <source>
        <tissue>Brain</tissue>
    </source>
</reference>
<reference key="3">
    <citation type="journal article" date="1997" name="Science">
        <title>Inhibition of brain Gz GAP and other RGS proteins by palmitoylation of G protein alpha subunits.</title>
        <authorList>
            <person name="Tu Y."/>
            <person name="Wang J."/>
            <person name="Ross E.M."/>
        </authorList>
    </citation>
    <scope>INHIBITION</scope>
</reference>
<name>RGS20_BOVIN</name>
<sequence>MPRLSQDNQQGHQKHFSRPSRRIQFLPPPWTEAYNVNVHQTVENEGCATAMHNVKLLGSPAAPTLLSLLSGTLSGFARFFALLLRRPPPEAPLRRRDFSALIPALPAAVLSPGHEERPGRLSLLLRAALALPGRPPGGRLPREVDASAGQSSSIPPMGSEWMEMRKRPVCAAQEPTACAPGQPGVENQGSNACCFCWCCCCSCSCLTVRNQEEQRLRRTSYEARTEDLPTCEESPGPTLEEASAWAQSFDKLMLTPAGRNAFREFLRTEFSEENMLFWMACEELKKEANKATIEEKARIIYEDYISILSPKEVSLDSRVRETINRSMAEPSRNIFDDAQLQIYTLMHRDSYPRFMNSALYKDLLRSLSEKAVEA</sequence>
<protein>
    <recommendedName>
        <fullName>Regulator of G-protein signaling 20</fullName>
        <shortName>RGS20</shortName>
    </recommendedName>
    <alternativeName>
        <fullName>Retina-specific regulator of G-protein signaling 1</fullName>
        <shortName>Ret-RGS1</shortName>
    </alternativeName>
</protein>
<dbReference type="EMBL" id="U89254">
    <property type="protein sequence ID" value="AAC48721.1"/>
    <property type="molecule type" value="mRNA"/>
</dbReference>
<dbReference type="RefSeq" id="XP_005215480.1">
    <property type="nucleotide sequence ID" value="XM_005215423.3"/>
</dbReference>
<dbReference type="SMR" id="P79348"/>
<dbReference type="FunCoup" id="P79348">
    <property type="interactions" value="962"/>
</dbReference>
<dbReference type="STRING" id="9913.ENSBTAP00000004487"/>
<dbReference type="PaxDb" id="9913-ENSBTAP00000004487"/>
<dbReference type="Ensembl" id="ENSBTAT00000004487.6">
    <property type="protein sequence ID" value="ENSBTAP00000004487.5"/>
    <property type="gene ID" value="ENSBTAG00000003454.7"/>
</dbReference>
<dbReference type="VEuPathDB" id="HostDB:ENSBTAG00000003454"/>
<dbReference type="VGNC" id="VGNC:33919">
    <property type="gene designation" value="RGS20"/>
</dbReference>
<dbReference type="eggNOG" id="KOG3589">
    <property type="taxonomic scope" value="Eukaryota"/>
</dbReference>
<dbReference type="GeneTree" id="ENSGT00940000159123"/>
<dbReference type="HOGENOM" id="CLU_059863_0_0_1"/>
<dbReference type="InParanoid" id="P79348"/>
<dbReference type="OMA" id="PMGSEWM"/>
<dbReference type="OrthoDB" id="10266999at2759"/>
<dbReference type="TreeFam" id="TF315837"/>
<dbReference type="Reactome" id="R-BTA-418594">
    <property type="pathway name" value="G alpha (i) signalling events"/>
</dbReference>
<dbReference type="Reactome" id="R-BTA-418597">
    <property type="pathway name" value="G alpha (z) signalling events"/>
</dbReference>
<dbReference type="Proteomes" id="UP000009136">
    <property type="component" value="Chromosome 14"/>
</dbReference>
<dbReference type="Bgee" id="ENSBTAG00000003454">
    <property type="expression patterns" value="Expressed in retina and 68 other cell types or tissues"/>
</dbReference>
<dbReference type="GO" id="GO:0005737">
    <property type="term" value="C:cytoplasm"/>
    <property type="evidence" value="ECO:0007669"/>
    <property type="project" value="UniProtKB-SubCell"/>
</dbReference>
<dbReference type="GO" id="GO:0016020">
    <property type="term" value="C:membrane"/>
    <property type="evidence" value="ECO:0007669"/>
    <property type="project" value="UniProtKB-SubCell"/>
</dbReference>
<dbReference type="GO" id="GO:0005634">
    <property type="term" value="C:nucleus"/>
    <property type="evidence" value="ECO:0007669"/>
    <property type="project" value="UniProtKB-SubCell"/>
</dbReference>
<dbReference type="GO" id="GO:0009968">
    <property type="term" value="P:negative regulation of signal transduction"/>
    <property type="evidence" value="ECO:0007669"/>
    <property type="project" value="UniProtKB-KW"/>
</dbReference>
<dbReference type="CDD" id="cd08746">
    <property type="entry name" value="RGS_RGS20"/>
    <property type="match status" value="1"/>
</dbReference>
<dbReference type="FunFam" id="1.10.167.10:FF:000001">
    <property type="entry name" value="Putative regulator of g-protein signaling 12"/>
    <property type="match status" value="1"/>
</dbReference>
<dbReference type="FunFam" id="1.10.196.10:FF:000001">
    <property type="entry name" value="Regulator of G-protein signaling 8"/>
    <property type="match status" value="1"/>
</dbReference>
<dbReference type="Gene3D" id="1.10.167.10">
    <property type="entry name" value="Regulator of G-protein Signalling 4, domain 2"/>
    <property type="match status" value="1"/>
</dbReference>
<dbReference type="InterPro" id="IPR016137">
    <property type="entry name" value="RGS"/>
</dbReference>
<dbReference type="InterPro" id="IPR036305">
    <property type="entry name" value="RGS_sf"/>
</dbReference>
<dbReference type="InterPro" id="IPR044926">
    <property type="entry name" value="RGS_subdomain_2"/>
</dbReference>
<dbReference type="PANTHER" id="PTHR10845">
    <property type="entry name" value="REGULATOR OF G PROTEIN SIGNALING"/>
    <property type="match status" value="1"/>
</dbReference>
<dbReference type="PANTHER" id="PTHR10845:SF277">
    <property type="entry name" value="REGULATOR OF G-PROTEIN SIGNALING 20"/>
    <property type="match status" value="1"/>
</dbReference>
<dbReference type="Pfam" id="PF00615">
    <property type="entry name" value="RGS"/>
    <property type="match status" value="1"/>
</dbReference>
<dbReference type="PRINTS" id="PR01301">
    <property type="entry name" value="RGSPROTEIN"/>
</dbReference>
<dbReference type="SMART" id="SM00315">
    <property type="entry name" value="RGS"/>
    <property type="match status" value="1"/>
</dbReference>
<dbReference type="SUPFAM" id="SSF48097">
    <property type="entry name" value="Regulator of G-protein signaling, RGS"/>
    <property type="match status" value="1"/>
</dbReference>
<dbReference type="PROSITE" id="PS50132">
    <property type="entry name" value="RGS"/>
    <property type="match status" value="1"/>
</dbReference>
<keyword id="KW-0963">Cytoplasm</keyword>
<keyword id="KW-0903">Direct protein sequencing</keyword>
<keyword id="KW-0325">Glycoprotein</keyword>
<keyword id="KW-0449">Lipoprotein</keyword>
<keyword id="KW-0472">Membrane</keyword>
<keyword id="KW-0539">Nucleus</keyword>
<keyword id="KW-0564">Palmitate</keyword>
<keyword id="KW-0597">Phosphoprotein</keyword>
<keyword id="KW-1185">Reference proteome</keyword>
<keyword id="KW-0734">Signal transduction inhibitor</keyword>
<keyword id="KW-0832">Ubl conjugation</keyword>
<evidence type="ECO:0000250" key="1"/>
<evidence type="ECO:0000255" key="2">
    <source>
        <dbReference type="PROSITE-ProRule" id="PRU00171"/>
    </source>
</evidence>
<evidence type="ECO:0000256" key="3">
    <source>
        <dbReference type="SAM" id="MobiDB-lite"/>
    </source>
</evidence>
<gene>
    <name type="primary">RGS20</name>
</gene>
<comment type="function">
    <text evidence="1">Inhibits signal transduction by increasing the GTPase activity of G protein alpha subunits thereby driving them into their inactive GDP-bound form. Binds selectively to G(z)-alpha and G(alpha)-i2 subunits, accelerates their GTPase activity and regulates their signaling activities. The G(z)-alpha activity is inhibited by the phosphorylation and palmitoylation of the G-protein. Negatively regulates mu-opioid receptor-mediated activation of the G-proteins (By similarity).</text>
</comment>
<comment type="subunit">
    <text evidence="1">Forms a complex with G(alpha)z/i2 subunits and mu-opioid receptors; the formation of this complex results in mu-opioid receptor desensitization. Interacts with OPRM1 (By similarity).</text>
</comment>
<comment type="subcellular location">
    <subcellularLocation>
        <location>Membrane</location>
        <topology>Lipid-anchor</topology>
    </subcellularLocation>
    <subcellularLocation>
        <location>Nucleus</location>
    </subcellularLocation>
    <subcellularLocation>
        <location>Cytoplasm</location>
    </subcellularLocation>
    <text evidence="1">Shuttles between the cytoplasm/cell membrane and the nucleus. Anchored to the membrane through palmitoylation.</text>
</comment>
<comment type="tissue specificity">
    <text>Retinal-specific. Expressed throughout the retina, including photoreceptors.</text>
</comment>
<comment type="PTM">
    <text evidence="1">Fatty acylated. Heavily palmitoylated in the cysteine string motif (By similarity).</text>
</comment>
<comment type="PTM">
    <text evidence="1">N- and O-glycosylated in synapsomal membranes.</text>
</comment>
<comment type="PTM">
    <text evidence="1">Serine phosphorylated in synapsomal membranes.</text>
</comment>
<comment type="PTM">
    <text evidence="1">Sumoylated with SUMO1 and SUMO2 in synaptosomes. The sumoylated forms act as a scaffold for sequestering mu-opioid receptor-activated G(alpha) subunits (By similarity).</text>
</comment>
<organism>
    <name type="scientific">Bos taurus</name>
    <name type="common">Bovine</name>
    <dbReference type="NCBI Taxonomy" id="9913"/>
    <lineage>
        <taxon>Eukaryota</taxon>
        <taxon>Metazoa</taxon>
        <taxon>Chordata</taxon>
        <taxon>Craniata</taxon>
        <taxon>Vertebrata</taxon>
        <taxon>Euteleostomi</taxon>
        <taxon>Mammalia</taxon>
        <taxon>Eutheria</taxon>
        <taxon>Laurasiatheria</taxon>
        <taxon>Artiodactyla</taxon>
        <taxon>Ruminantia</taxon>
        <taxon>Pecora</taxon>
        <taxon>Bovidae</taxon>
        <taxon>Bovinae</taxon>
        <taxon>Bos</taxon>
    </lineage>
</organism>
<proteinExistence type="evidence at protein level"/>
<accession>P79348</accession>